<evidence type="ECO:0000255" key="1">
    <source>
        <dbReference type="HAMAP-Rule" id="MF_00580"/>
    </source>
</evidence>
<evidence type="ECO:0000305" key="2"/>
<accession>Q8CWW5</accession>
<accession>Q8KJ11</accession>
<protein>
    <recommendedName>
        <fullName evidence="1">Co-chaperonin GroES</fullName>
    </recommendedName>
    <alternativeName>
        <fullName evidence="1">10 kDa chaperonin</fullName>
    </alternativeName>
    <alternativeName>
        <fullName evidence="1">Chaperonin-10</fullName>
        <shortName evidence="1">Cpn10</shortName>
    </alternativeName>
</protein>
<proteinExistence type="inferred from homology"/>
<comment type="function">
    <text evidence="1">Together with the chaperonin GroEL, plays an essential role in assisting protein folding. The GroEL-GroES system forms a nano-cage that allows encapsulation of the non-native substrate proteins and provides a physical environment optimized to promote and accelerate protein folding. GroES binds to the apical surface of the GroEL ring, thereby capping the opening of the GroEL channel.</text>
</comment>
<comment type="subunit">
    <text evidence="1">Heptamer of 7 subunits arranged in a ring. Interacts with the chaperonin GroEL.</text>
</comment>
<comment type="subcellular location">
    <subcellularLocation>
        <location evidence="1">Cytoplasm</location>
    </subcellularLocation>
</comment>
<comment type="similarity">
    <text evidence="1">Belongs to the GroES chaperonin family.</text>
</comment>
<name>CH10_STRMU</name>
<sequence length="95" mass="10039">MLKPLGDRVVVQLKEEKEQTVGGFVLAGASQEKTKKAQVVAVGEGVRTLTGELVASSLVQGDTILIENHVGTPVKDDGKDCLIIREADVLAVVND</sequence>
<reference key="1">
    <citation type="submission" date="2001-06" db="EMBL/GenBank/DDBJ databases">
        <title>The groESL genes of Streptococcus mutans.</title>
        <authorList>
            <person name="Teng L.-J."/>
        </authorList>
    </citation>
    <scope>NUCLEOTIDE SEQUENCE [GENOMIC DNA]</scope>
</reference>
<reference key="2">
    <citation type="journal article" date="2002" name="Proc. Natl. Acad. Sci. U.S.A.">
        <title>Genome sequence of Streptococcus mutans UA159, a cariogenic dental pathogen.</title>
        <authorList>
            <person name="Ajdic D.J."/>
            <person name="McShan W.M."/>
            <person name="McLaughlin R.E."/>
            <person name="Savic G."/>
            <person name="Chang J."/>
            <person name="Carson M.B."/>
            <person name="Primeaux C."/>
            <person name="Tian R."/>
            <person name="Kenton S."/>
            <person name="Jia H.G."/>
            <person name="Lin S.P."/>
            <person name="Qian Y."/>
            <person name="Li S."/>
            <person name="Zhu H."/>
            <person name="Najar F.Z."/>
            <person name="Lai H."/>
            <person name="White J."/>
            <person name="Roe B.A."/>
            <person name="Ferretti J.J."/>
        </authorList>
    </citation>
    <scope>NUCLEOTIDE SEQUENCE [LARGE SCALE GENOMIC DNA]</scope>
    <source>
        <strain>ATCC 700610 / UA159</strain>
    </source>
</reference>
<organism>
    <name type="scientific">Streptococcus mutans serotype c (strain ATCC 700610 / UA159)</name>
    <dbReference type="NCBI Taxonomy" id="210007"/>
    <lineage>
        <taxon>Bacteria</taxon>
        <taxon>Bacillati</taxon>
        <taxon>Bacillota</taxon>
        <taxon>Bacilli</taxon>
        <taxon>Lactobacillales</taxon>
        <taxon>Streptococcaceae</taxon>
        <taxon>Streptococcus</taxon>
    </lineage>
</organism>
<keyword id="KW-0143">Chaperone</keyword>
<keyword id="KW-0963">Cytoplasm</keyword>
<keyword id="KW-1185">Reference proteome</keyword>
<feature type="chain" id="PRO_0000174863" description="Co-chaperonin GroES">
    <location>
        <begin position="1"/>
        <end position="95"/>
    </location>
</feature>
<feature type="sequence conflict" description="In Ref. 1; AAM73645." evidence="2" ref="1">
    <original>V</original>
    <variation>A</variation>
    <location>
        <position position="59"/>
    </location>
</feature>
<feature type="sequence conflict" description="In Ref. 1; AAM73645." evidence="2" ref="1">
    <original>C</original>
    <variation>Y</variation>
    <location>
        <position position="81"/>
    </location>
</feature>
<gene>
    <name evidence="1" type="primary">groES</name>
    <name evidence="1" type="synonym">groS</name>
    <name type="ordered locus">SMU_1955</name>
</gene>
<dbReference type="EMBL" id="AE014133">
    <property type="protein sequence ID" value="AAN59562.1"/>
    <property type="molecule type" value="Genomic_DNA"/>
</dbReference>
<dbReference type="EMBL" id="AF389516">
    <property type="protein sequence ID" value="AAM73645.1"/>
    <property type="molecule type" value="Genomic_DNA"/>
</dbReference>
<dbReference type="RefSeq" id="NP_722256.1">
    <property type="nucleotide sequence ID" value="NC_004350.2"/>
</dbReference>
<dbReference type="RefSeq" id="WP_002352364.1">
    <property type="nucleotide sequence ID" value="NC_004350.2"/>
</dbReference>
<dbReference type="SMR" id="Q8CWW5"/>
<dbReference type="STRING" id="210007.SMU_1955"/>
<dbReference type="KEGG" id="smu:SMU_1955"/>
<dbReference type="PATRIC" id="fig|210007.7.peg.1738"/>
<dbReference type="eggNOG" id="COG0234">
    <property type="taxonomic scope" value="Bacteria"/>
</dbReference>
<dbReference type="HOGENOM" id="CLU_132825_1_2_9"/>
<dbReference type="OrthoDB" id="9806791at2"/>
<dbReference type="PhylomeDB" id="Q8CWW5"/>
<dbReference type="Proteomes" id="UP000002512">
    <property type="component" value="Chromosome"/>
</dbReference>
<dbReference type="GO" id="GO:0005737">
    <property type="term" value="C:cytoplasm"/>
    <property type="evidence" value="ECO:0007669"/>
    <property type="project" value="UniProtKB-SubCell"/>
</dbReference>
<dbReference type="GO" id="GO:0005524">
    <property type="term" value="F:ATP binding"/>
    <property type="evidence" value="ECO:0007669"/>
    <property type="project" value="InterPro"/>
</dbReference>
<dbReference type="GO" id="GO:0046872">
    <property type="term" value="F:metal ion binding"/>
    <property type="evidence" value="ECO:0007669"/>
    <property type="project" value="TreeGrafter"/>
</dbReference>
<dbReference type="GO" id="GO:0044183">
    <property type="term" value="F:protein folding chaperone"/>
    <property type="evidence" value="ECO:0007669"/>
    <property type="project" value="InterPro"/>
</dbReference>
<dbReference type="GO" id="GO:0051087">
    <property type="term" value="F:protein-folding chaperone binding"/>
    <property type="evidence" value="ECO:0007669"/>
    <property type="project" value="TreeGrafter"/>
</dbReference>
<dbReference type="GO" id="GO:0051082">
    <property type="term" value="F:unfolded protein binding"/>
    <property type="evidence" value="ECO:0007669"/>
    <property type="project" value="TreeGrafter"/>
</dbReference>
<dbReference type="GO" id="GO:0051085">
    <property type="term" value="P:chaperone cofactor-dependent protein refolding"/>
    <property type="evidence" value="ECO:0007669"/>
    <property type="project" value="TreeGrafter"/>
</dbReference>
<dbReference type="CDD" id="cd00320">
    <property type="entry name" value="cpn10"/>
    <property type="match status" value="1"/>
</dbReference>
<dbReference type="FunFam" id="2.30.33.40:FF:000007">
    <property type="entry name" value="10 kDa chaperonin"/>
    <property type="match status" value="1"/>
</dbReference>
<dbReference type="Gene3D" id="2.30.33.40">
    <property type="entry name" value="GroES chaperonin"/>
    <property type="match status" value="1"/>
</dbReference>
<dbReference type="HAMAP" id="MF_00580">
    <property type="entry name" value="CH10"/>
    <property type="match status" value="1"/>
</dbReference>
<dbReference type="InterPro" id="IPR020818">
    <property type="entry name" value="Chaperonin_GroES"/>
</dbReference>
<dbReference type="InterPro" id="IPR037124">
    <property type="entry name" value="Chaperonin_GroES_sf"/>
</dbReference>
<dbReference type="InterPro" id="IPR018369">
    <property type="entry name" value="Chaprnonin_Cpn10_CS"/>
</dbReference>
<dbReference type="InterPro" id="IPR011032">
    <property type="entry name" value="GroES-like_sf"/>
</dbReference>
<dbReference type="NCBIfam" id="NF001528">
    <property type="entry name" value="PRK00364.1-4"/>
    <property type="match status" value="1"/>
</dbReference>
<dbReference type="PANTHER" id="PTHR10772">
    <property type="entry name" value="10 KDA HEAT SHOCK PROTEIN"/>
    <property type="match status" value="1"/>
</dbReference>
<dbReference type="PANTHER" id="PTHR10772:SF58">
    <property type="entry name" value="CO-CHAPERONIN GROES"/>
    <property type="match status" value="1"/>
</dbReference>
<dbReference type="Pfam" id="PF00166">
    <property type="entry name" value="Cpn10"/>
    <property type="match status" value="1"/>
</dbReference>
<dbReference type="PRINTS" id="PR00297">
    <property type="entry name" value="CHAPERONIN10"/>
</dbReference>
<dbReference type="SMART" id="SM00883">
    <property type="entry name" value="Cpn10"/>
    <property type="match status" value="1"/>
</dbReference>
<dbReference type="SUPFAM" id="SSF50129">
    <property type="entry name" value="GroES-like"/>
    <property type="match status" value="1"/>
</dbReference>
<dbReference type="PROSITE" id="PS00681">
    <property type="entry name" value="CHAPERONINS_CPN10"/>
    <property type="match status" value="1"/>
</dbReference>